<gene>
    <name type="primary">NPY2R</name>
</gene>
<organism>
    <name type="scientific">Cavia porcellus</name>
    <name type="common">Guinea pig</name>
    <dbReference type="NCBI Taxonomy" id="10141"/>
    <lineage>
        <taxon>Eukaryota</taxon>
        <taxon>Metazoa</taxon>
        <taxon>Chordata</taxon>
        <taxon>Craniata</taxon>
        <taxon>Vertebrata</taxon>
        <taxon>Euteleostomi</taxon>
        <taxon>Mammalia</taxon>
        <taxon>Eutheria</taxon>
        <taxon>Euarchontoglires</taxon>
        <taxon>Glires</taxon>
        <taxon>Rodentia</taxon>
        <taxon>Hystricomorpha</taxon>
        <taxon>Caviidae</taxon>
        <taxon>Cavia</taxon>
    </lineage>
</organism>
<keyword id="KW-1003">Cell membrane</keyword>
<keyword id="KW-1015">Disulfide bond</keyword>
<keyword id="KW-0297">G-protein coupled receptor</keyword>
<keyword id="KW-0325">Glycoprotein</keyword>
<keyword id="KW-0449">Lipoprotein</keyword>
<keyword id="KW-0472">Membrane</keyword>
<keyword id="KW-0564">Palmitate</keyword>
<keyword id="KW-0675">Receptor</keyword>
<keyword id="KW-1185">Reference proteome</keyword>
<keyword id="KW-0807">Transducer</keyword>
<keyword id="KW-0812">Transmembrane</keyword>
<keyword id="KW-1133">Transmembrane helix</keyword>
<name>NPY2R_CAVPO</name>
<dbReference type="EMBL" id="AF072821">
    <property type="protein sequence ID" value="AAD13143.1"/>
    <property type="molecule type" value="Genomic_DNA"/>
</dbReference>
<dbReference type="SMR" id="Q9Z2D5"/>
<dbReference type="FunCoup" id="Q9Z2D5">
    <property type="interactions" value="562"/>
</dbReference>
<dbReference type="STRING" id="10141.ENSCPOP00000027806"/>
<dbReference type="BindingDB" id="Q9Z2D5"/>
<dbReference type="GlyCosmos" id="Q9Z2D5">
    <property type="glycosylation" value="1 site, No reported glycans"/>
</dbReference>
<dbReference type="eggNOG" id="KOG3656">
    <property type="taxonomic scope" value="Eukaryota"/>
</dbReference>
<dbReference type="InParanoid" id="Q9Z2D5"/>
<dbReference type="Proteomes" id="UP000005447">
    <property type="component" value="Unassembled WGS sequence"/>
</dbReference>
<dbReference type="GO" id="GO:0005886">
    <property type="term" value="C:plasma membrane"/>
    <property type="evidence" value="ECO:0007669"/>
    <property type="project" value="UniProtKB-SubCell"/>
</dbReference>
<dbReference type="GO" id="GO:0004983">
    <property type="term" value="F:neuropeptide Y receptor activity"/>
    <property type="evidence" value="ECO:0007669"/>
    <property type="project" value="InterPro"/>
</dbReference>
<dbReference type="CDD" id="cd15399">
    <property type="entry name" value="7tmA_NPY2R"/>
    <property type="match status" value="1"/>
</dbReference>
<dbReference type="FunFam" id="1.20.1070.10:FF:000158">
    <property type="entry name" value="Neuropeptide Y receptor type 2"/>
    <property type="match status" value="1"/>
</dbReference>
<dbReference type="Gene3D" id="1.20.1070.10">
    <property type="entry name" value="Rhodopsin 7-helix transmembrane proteins"/>
    <property type="match status" value="1"/>
</dbReference>
<dbReference type="InterPro" id="IPR000276">
    <property type="entry name" value="GPCR_Rhodpsn"/>
</dbReference>
<dbReference type="InterPro" id="IPR017452">
    <property type="entry name" value="GPCR_Rhodpsn_7TM"/>
</dbReference>
<dbReference type="InterPro" id="IPR001358">
    <property type="entry name" value="NPY2_rcpt"/>
</dbReference>
<dbReference type="InterPro" id="IPR000611">
    <property type="entry name" value="NPY_rcpt"/>
</dbReference>
<dbReference type="PANTHER" id="PTHR24235">
    <property type="entry name" value="NEUROPEPTIDE Y RECEPTOR"/>
    <property type="match status" value="1"/>
</dbReference>
<dbReference type="PANTHER" id="PTHR24235:SF20">
    <property type="entry name" value="NEUROPEPTIDE Y RECEPTOR TYPE 2"/>
    <property type="match status" value="1"/>
</dbReference>
<dbReference type="Pfam" id="PF00001">
    <property type="entry name" value="7tm_1"/>
    <property type="match status" value="1"/>
</dbReference>
<dbReference type="PRINTS" id="PR00237">
    <property type="entry name" value="GPCRRHODOPSN"/>
</dbReference>
<dbReference type="PRINTS" id="PR01014">
    <property type="entry name" value="NRPEPTIDEY2R"/>
</dbReference>
<dbReference type="PRINTS" id="PR01012">
    <property type="entry name" value="NRPEPTIDEYR"/>
</dbReference>
<dbReference type="SMART" id="SM01381">
    <property type="entry name" value="7TM_GPCR_Srsx"/>
    <property type="match status" value="1"/>
</dbReference>
<dbReference type="SUPFAM" id="SSF81321">
    <property type="entry name" value="Family A G protein-coupled receptor-like"/>
    <property type="match status" value="1"/>
</dbReference>
<dbReference type="PROSITE" id="PS00237">
    <property type="entry name" value="G_PROTEIN_RECEP_F1_1"/>
    <property type="match status" value="1"/>
</dbReference>
<dbReference type="PROSITE" id="PS50262">
    <property type="entry name" value="G_PROTEIN_RECEP_F1_2"/>
    <property type="match status" value="1"/>
</dbReference>
<feature type="chain" id="PRO_0000069927" description="Neuropeptide Y receptor type 2">
    <location>
        <begin position="1"/>
        <end position="381"/>
    </location>
</feature>
<feature type="topological domain" description="Extracellular" evidence="1">
    <location>
        <begin position="1"/>
        <end position="52"/>
    </location>
</feature>
<feature type="transmembrane region" description="Helical; Name=1" evidence="1">
    <location>
        <begin position="53"/>
        <end position="73"/>
    </location>
</feature>
<feature type="topological domain" description="Cytoplasmic" evidence="1">
    <location>
        <begin position="74"/>
        <end position="87"/>
    </location>
</feature>
<feature type="transmembrane region" description="Helical; Name=2" evidence="1">
    <location>
        <begin position="88"/>
        <end position="108"/>
    </location>
</feature>
<feature type="topological domain" description="Extracellular" evidence="1">
    <location>
        <begin position="109"/>
        <end position="125"/>
    </location>
</feature>
<feature type="transmembrane region" description="Helical; Name=3" evidence="1">
    <location>
        <begin position="126"/>
        <end position="146"/>
    </location>
</feature>
<feature type="topological domain" description="Cytoplasmic" evidence="1">
    <location>
        <begin position="147"/>
        <end position="166"/>
    </location>
</feature>
<feature type="transmembrane region" description="Helical; Name=4" evidence="1">
    <location>
        <begin position="167"/>
        <end position="187"/>
    </location>
</feature>
<feature type="topological domain" description="Extracellular" evidence="1">
    <location>
        <begin position="188"/>
        <end position="217"/>
    </location>
</feature>
<feature type="transmembrane region" description="Helical; Name=5" evidence="1">
    <location>
        <begin position="218"/>
        <end position="238"/>
    </location>
</feature>
<feature type="topological domain" description="Cytoplasmic" evidence="1">
    <location>
        <begin position="239"/>
        <end position="269"/>
    </location>
</feature>
<feature type="transmembrane region" description="Helical; Name=6" evidence="1">
    <location>
        <begin position="270"/>
        <end position="290"/>
    </location>
</feature>
<feature type="topological domain" description="Extracellular" evidence="1">
    <location>
        <begin position="291"/>
        <end position="305"/>
    </location>
</feature>
<feature type="transmembrane region" description="Helical; Name=7" evidence="1">
    <location>
        <begin position="306"/>
        <end position="326"/>
    </location>
</feature>
<feature type="topological domain" description="Cytoplasmic" evidence="1">
    <location>
        <begin position="327"/>
        <end position="381"/>
    </location>
</feature>
<feature type="region of interest" description="Disordered" evidence="3">
    <location>
        <begin position="1"/>
        <end position="37"/>
    </location>
</feature>
<feature type="lipid moiety-binding region" description="S-palmitoyl cysteine" evidence="1">
    <location>
        <position position="343"/>
    </location>
</feature>
<feature type="glycosylation site" description="N-linked (GlcNAc...) asparagine" evidence="1">
    <location>
        <position position="11"/>
    </location>
</feature>
<feature type="disulfide bond" evidence="2">
    <location>
        <begin position="124"/>
        <end position="204"/>
    </location>
</feature>
<accession>Q9Z2D5</accession>
<comment type="function">
    <text>Receptor for neuropeptide Y and peptide YY.</text>
</comment>
<comment type="subcellular location">
    <subcellularLocation>
        <location>Cell membrane</location>
        <topology>Multi-pass membrane protein</topology>
    </subcellularLocation>
</comment>
<comment type="similarity">
    <text evidence="2">Belongs to the G-protein coupled receptor 1 family.</text>
</comment>
<protein>
    <recommendedName>
        <fullName>Neuropeptide Y receptor type 2</fullName>
        <shortName>NPY2-R</shortName>
    </recommendedName>
    <alternativeName>
        <fullName>NPY-Y2 receptor</fullName>
        <shortName>Y2 receptor</shortName>
    </alternativeName>
</protein>
<proteinExistence type="inferred from homology"/>
<reference key="1">
    <citation type="journal article" date="1998" name="Regul. Pept.">
        <title>Cloning and functional expression of the guinea pig neuropeptide Y Y2 receptor.</title>
        <authorList>
            <person name="Sharma P.S."/>
            <person name="Holmberg S.K."/>
            <person name="Eriksson H."/>
            <person name="Beck-Sickinger A.G."/>
            <person name="Grundemar L."/>
            <person name="Larhammar D."/>
        </authorList>
    </citation>
    <scope>NUCLEOTIDE SEQUENCE [GENOMIC DNA]</scope>
</reference>
<sequence length="381" mass="42343">MGPIGTEADENQTVEEIKVEPYGPGHTTPRGELAPDPEPELIDSTKLTEVRVVLILAYCSIILLGVVGNSLVIHVVIKFKSMRTVTNFFIANLAVADLLVNTLCLPFTLTYTLMGEWKMGPVLCHLVPYAQGLAVQVSTVTLTVIALDRHRCIVYHLDSKISKQNSFLIIGLAWGISALLASPLAIFREYSLIEIIPDFEIVACTEKWPGEEKSIYGTVYSLSSLLILYVLPLGIISVSYVRIWSKLKNHVSPGAANDHYHQRRQKTTKMLVFVVVVFAVSWLPLHAFQLAVDIDSQVLDLKEYKLIFTVFHIIAMCSTFANPLLYGWMNSNYRKAFLSAFRCQQRLDAIQSEVCVTGKAKTNVEVEKNHGAADSAEATNV</sequence>
<evidence type="ECO:0000255" key="1"/>
<evidence type="ECO:0000255" key="2">
    <source>
        <dbReference type="PROSITE-ProRule" id="PRU00521"/>
    </source>
</evidence>
<evidence type="ECO:0000256" key="3">
    <source>
        <dbReference type="SAM" id="MobiDB-lite"/>
    </source>
</evidence>